<name>PDXS_RUMCH</name>
<evidence type="ECO:0000255" key="1">
    <source>
        <dbReference type="HAMAP-Rule" id="MF_01824"/>
    </source>
</evidence>
<protein>
    <recommendedName>
        <fullName evidence="1">Pyridoxal 5'-phosphate synthase subunit PdxS</fullName>
        <shortName evidence="1">PLP synthase subunit PdxS</shortName>
        <ecNumber evidence="1">4.3.3.6</ecNumber>
    </recommendedName>
    <alternativeName>
        <fullName evidence="1">Pdx1</fullName>
    </alternativeName>
</protein>
<keyword id="KW-0456">Lyase</keyword>
<keyword id="KW-0663">Pyridoxal phosphate</keyword>
<keyword id="KW-1185">Reference proteome</keyword>
<keyword id="KW-0704">Schiff base</keyword>
<accession>B8I363</accession>
<gene>
    <name evidence="1" type="primary">pdxS</name>
    <name type="ordered locus">Ccel_1858</name>
</gene>
<feature type="chain" id="PRO_1000188219" description="Pyridoxal 5'-phosphate synthase subunit PdxS">
    <location>
        <begin position="1"/>
        <end position="292"/>
    </location>
</feature>
<feature type="active site" description="Schiff-base intermediate with D-ribose 5-phosphate" evidence="1">
    <location>
        <position position="79"/>
    </location>
</feature>
<feature type="binding site" evidence="1">
    <location>
        <position position="22"/>
    </location>
    <ligand>
        <name>D-ribose 5-phosphate</name>
        <dbReference type="ChEBI" id="CHEBI:78346"/>
    </ligand>
</feature>
<feature type="binding site" evidence="1">
    <location>
        <position position="151"/>
    </location>
    <ligand>
        <name>D-ribose 5-phosphate</name>
        <dbReference type="ChEBI" id="CHEBI:78346"/>
    </ligand>
</feature>
<feature type="binding site" evidence="1">
    <location>
        <position position="163"/>
    </location>
    <ligand>
        <name>D-glyceraldehyde 3-phosphate</name>
        <dbReference type="ChEBI" id="CHEBI:59776"/>
    </ligand>
</feature>
<feature type="binding site" evidence="1">
    <location>
        <position position="212"/>
    </location>
    <ligand>
        <name>D-ribose 5-phosphate</name>
        <dbReference type="ChEBI" id="CHEBI:78346"/>
    </ligand>
</feature>
<feature type="binding site" evidence="1">
    <location>
        <begin position="233"/>
        <end position="234"/>
    </location>
    <ligand>
        <name>D-ribose 5-phosphate</name>
        <dbReference type="ChEBI" id="CHEBI:78346"/>
    </ligand>
</feature>
<dbReference type="EC" id="4.3.3.6" evidence="1"/>
<dbReference type="EMBL" id="CP001348">
    <property type="protein sequence ID" value="ACL76206.1"/>
    <property type="molecule type" value="Genomic_DNA"/>
</dbReference>
<dbReference type="RefSeq" id="WP_015925311.1">
    <property type="nucleotide sequence ID" value="NC_011898.1"/>
</dbReference>
<dbReference type="SMR" id="B8I363"/>
<dbReference type="STRING" id="394503.Ccel_1858"/>
<dbReference type="KEGG" id="cce:Ccel_1858"/>
<dbReference type="eggNOG" id="COG0214">
    <property type="taxonomic scope" value="Bacteria"/>
</dbReference>
<dbReference type="HOGENOM" id="CLU_055352_1_0_9"/>
<dbReference type="OrthoDB" id="9772545at2"/>
<dbReference type="UniPathway" id="UPA00245"/>
<dbReference type="Proteomes" id="UP000001349">
    <property type="component" value="Chromosome"/>
</dbReference>
<dbReference type="GO" id="GO:0036381">
    <property type="term" value="F:pyridoxal 5'-phosphate synthase (glutamine hydrolysing) activity"/>
    <property type="evidence" value="ECO:0007669"/>
    <property type="project" value="UniProtKB-UniRule"/>
</dbReference>
<dbReference type="GO" id="GO:0006520">
    <property type="term" value="P:amino acid metabolic process"/>
    <property type="evidence" value="ECO:0007669"/>
    <property type="project" value="TreeGrafter"/>
</dbReference>
<dbReference type="GO" id="GO:0042823">
    <property type="term" value="P:pyridoxal phosphate biosynthetic process"/>
    <property type="evidence" value="ECO:0007669"/>
    <property type="project" value="UniProtKB-UniRule"/>
</dbReference>
<dbReference type="GO" id="GO:0008615">
    <property type="term" value="P:pyridoxine biosynthetic process"/>
    <property type="evidence" value="ECO:0007669"/>
    <property type="project" value="TreeGrafter"/>
</dbReference>
<dbReference type="CDD" id="cd04727">
    <property type="entry name" value="pdxS"/>
    <property type="match status" value="1"/>
</dbReference>
<dbReference type="FunFam" id="3.20.20.70:FF:000001">
    <property type="entry name" value="Pyridoxine biosynthesis protein PDX1"/>
    <property type="match status" value="1"/>
</dbReference>
<dbReference type="Gene3D" id="3.20.20.70">
    <property type="entry name" value="Aldolase class I"/>
    <property type="match status" value="1"/>
</dbReference>
<dbReference type="HAMAP" id="MF_01824">
    <property type="entry name" value="PdxS"/>
    <property type="match status" value="1"/>
</dbReference>
<dbReference type="InterPro" id="IPR013785">
    <property type="entry name" value="Aldolase_TIM"/>
</dbReference>
<dbReference type="InterPro" id="IPR001852">
    <property type="entry name" value="PdxS/SNZ"/>
</dbReference>
<dbReference type="InterPro" id="IPR033755">
    <property type="entry name" value="PdxS/SNZ_N"/>
</dbReference>
<dbReference type="InterPro" id="IPR011060">
    <property type="entry name" value="RibuloseP-bd_barrel"/>
</dbReference>
<dbReference type="NCBIfam" id="NF003215">
    <property type="entry name" value="PRK04180.1"/>
    <property type="match status" value="1"/>
</dbReference>
<dbReference type="NCBIfam" id="TIGR00343">
    <property type="entry name" value="pyridoxal 5'-phosphate synthase lyase subunit PdxS"/>
    <property type="match status" value="1"/>
</dbReference>
<dbReference type="PANTHER" id="PTHR31829">
    <property type="entry name" value="PYRIDOXAL 5'-PHOSPHATE SYNTHASE SUBUNIT SNZ1-RELATED"/>
    <property type="match status" value="1"/>
</dbReference>
<dbReference type="PANTHER" id="PTHR31829:SF0">
    <property type="entry name" value="PYRIDOXAL 5'-PHOSPHATE SYNTHASE SUBUNIT SNZ1-RELATED"/>
    <property type="match status" value="1"/>
</dbReference>
<dbReference type="Pfam" id="PF01680">
    <property type="entry name" value="SOR_SNZ"/>
    <property type="match status" value="1"/>
</dbReference>
<dbReference type="PIRSF" id="PIRSF029271">
    <property type="entry name" value="Pdx1"/>
    <property type="match status" value="1"/>
</dbReference>
<dbReference type="SUPFAM" id="SSF51366">
    <property type="entry name" value="Ribulose-phoshate binding barrel"/>
    <property type="match status" value="1"/>
</dbReference>
<dbReference type="PROSITE" id="PS01235">
    <property type="entry name" value="PDXS_SNZ_1"/>
    <property type="match status" value="1"/>
</dbReference>
<dbReference type="PROSITE" id="PS51129">
    <property type="entry name" value="PDXS_SNZ_2"/>
    <property type="match status" value="1"/>
</dbReference>
<comment type="function">
    <text evidence="1">Catalyzes the formation of pyridoxal 5'-phosphate from ribose 5-phosphate (RBP), glyceraldehyde 3-phosphate (G3P) and ammonia. The ammonia is provided by the PdxT subunit. Can also use ribulose 5-phosphate and dihydroxyacetone phosphate as substrates, resulting from enzyme-catalyzed isomerization of RBP and G3P, respectively.</text>
</comment>
<comment type="catalytic activity">
    <reaction evidence="1">
        <text>aldehydo-D-ribose 5-phosphate + D-glyceraldehyde 3-phosphate + L-glutamine = pyridoxal 5'-phosphate + L-glutamate + phosphate + 3 H2O + H(+)</text>
        <dbReference type="Rhea" id="RHEA:31507"/>
        <dbReference type="ChEBI" id="CHEBI:15377"/>
        <dbReference type="ChEBI" id="CHEBI:15378"/>
        <dbReference type="ChEBI" id="CHEBI:29985"/>
        <dbReference type="ChEBI" id="CHEBI:43474"/>
        <dbReference type="ChEBI" id="CHEBI:58273"/>
        <dbReference type="ChEBI" id="CHEBI:58359"/>
        <dbReference type="ChEBI" id="CHEBI:59776"/>
        <dbReference type="ChEBI" id="CHEBI:597326"/>
        <dbReference type="EC" id="4.3.3.6"/>
    </reaction>
</comment>
<comment type="pathway">
    <text evidence="1">Cofactor biosynthesis; pyridoxal 5'-phosphate biosynthesis.</text>
</comment>
<comment type="subunit">
    <text evidence="1">In the presence of PdxT, forms a dodecamer of heterodimers.</text>
</comment>
<comment type="similarity">
    <text evidence="1">Belongs to the PdxS/SNZ family.</text>
</comment>
<sequence length="292" mass="31585">MNERYQLNKNLAQMLKGGVIMDVVNAKEAEIAQKAGAVAVMALERVPSDIRKAGGVARMSDPKMIKDIQSAVSIPVMAKVRIGHFVEAQVLEALSIDYIDESEVLTPADEEFHIDKHTFKVPFVCGAKNLGEALRRISEGASMIRTKGEAGTGNVVEAVRHMRTVTNEIRKVQSASKQELMTIAKEFGAPYDLILYVHENGKLPVINFAAGGIATPADAALMMQLGCDGVFVGSGIFKSSDPAKRAKAIVKATTYYNDPQIIAEVSEELGTAMDSIDVRELTGNSLYASRGW</sequence>
<proteinExistence type="inferred from homology"/>
<organism>
    <name type="scientific">Ruminiclostridium cellulolyticum (strain ATCC 35319 / DSM 5812 / JCM 6584 / H10)</name>
    <name type="common">Clostridium cellulolyticum</name>
    <dbReference type="NCBI Taxonomy" id="394503"/>
    <lineage>
        <taxon>Bacteria</taxon>
        <taxon>Bacillati</taxon>
        <taxon>Bacillota</taxon>
        <taxon>Clostridia</taxon>
        <taxon>Eubacteriales</taxon>
        <taxon>Oscillospiraceae</taxon>
        <taxon>Ruminiclostridium</taxon>
    </lineage>
</organism>
<reference key="1">
    <citation type="submission" date="2009-01" db="EMBL/GenBank/DDBJ databases">
        <title>Complete sequence of Clostridium cellulolyticum H10.</title>
        <authorList>
            <consortium name="US DOE Joint Genome Institute"/>
            <person name="Lucas S."/>
            <person name="Copeland A."/>
            <person name="Lapidus A."/>
            <person name="Glavina del Rio T."/>
            <person name="Dalin E."/>
            <person name="Tice H."/>
            <person name="Bruce D."/>
            <person name="Goodwin L."/>
            <person name="Pitluck S."/>
            <person name="Chertkov O."/>
            <person name="Saunders E."/>
            <person name="Brettin T."/>
            <person name="Detter J.C."/>
            <person name="Han C."/>
            <person name="Larimer F."/>
            <person name="Land M."/>
            <person name="Hauser L."/>
            <person name="Kyrpides N."/>
            <person name="Ivanova N."/>
            <person name="Zhou J."/>
            <person name="Richardson P."/>
        </authorList>
    </citation>
    <scope>NUCLEOTIDE SEQUENCE [LARGE SCALE GENOMIC DNA]</scope>
    <source>
        <strain>ATCC 35319 / DSM 5812 / JCM 6584 / H10</strain>
    </source>
</reference>